<name>CLPP_CHLMO</name>
<keyword id="KW-0068">Autocatalytic cleavage</keyword>
<keyword id="KW-0150">Chloroplast</keyword>
<keyword id="KW-0378">Hydrolase</keyword>
<keyword id="KW-0934">Plastid</keyword>
<keyword id="KW-0645">Protease</keyword>
<keyword id="KW-0651">Protein splicing</keyword>
<keyword id="KW-0720">Serine protease</keyword>
<geneLocation type="chloroplast"/>
<gene>
    <name type="primary">clpP</name>
</gene>
<organism>
    <name type="scientific">Chlamydomonas moewusii</name>
    <name type="common">Chlamydomonas eugametos</name>
    <dbReference type="NCBI Taxonomy" id="3054"/>
    <lineage>
        <taxon>Eukaryota</taxon>
        <taxon>Viridiplantae</taxon>
        <taxon>Chlorophyta</taxon>
        <taxon>core chlorophytes</taxon>
        <taxon>Chlorophyceae</taxon>
        <taxon>CS clade</taxon>
        <taxon>Chlamydomonadales</taxon>
        <taxon>Chlamydomonadaceae</taxon>
        <taxon>Chlamydomonas</taxon>
    </lineage>
</organism>
<comment type="function">
    <text evidence="1">Cleaves peptides in various proteins in a process that requires ATP hydrolysis. Has a chymotrypsin-like activity. Plays a major role in the degradation of misfolded proteins (By similarity).</text>
</comment>
<comment type="catalytic activity">
    <reaction evidence="3 4">
        <text>Hydrolysis of proteins to small peptides in the presence of ATP and magnesium. alpha-casein is the usual test substrate. In the absence of ATP, only oligopeptides shorter than five residues are hydrolyzed (such as succinyl-Leu-Tyr-|-NHMec, and Leu-Tyr-Leu-|-Tyr-Trp, in which cleavage of the -Tyr-|-Leu- and -Tyr-|-Trp bonds also occurs).</text>
        <dbReference type="EC" id="3.4.21.92"/>
    </reaction>
</comment>
<comment type="subunit">
    <text>Component of the chloroplastic Clp protease core complex.</text>
</comment>
<comment type="subcellular location">
    <subcellularLocation>
        <location evidence="1">Plastid</location>
        <location evidence="1">Chloroplast stroma</location>
    </subcellularLocation>
</comment>
<comment type="domain">
    <text>This gene contains two large insertion sequences (IS1 and Ceu clpP intein) that divide the clpP gene into three sequence domains. Each insertion sequence forms a continuous open reading frame with its upstream and downstream sequence domains.</text>
</comment>
<comment type="PTM">
    <text>This protein undergoes a protein self splicing that involves a post-translational excision of the intervening region (intein) followed by peptide ligation.</text>
</comment>
<comment type="similarity">
    <text evidence="6">Belongs to the peptidase S14 family.</text>
</comment>
<evidence type="ECO:0000250" key="1"/>
<evidence type="ECO:0000255" key="2">
    <source>
        <dbReference type="PROSITE-ProRule" id="PRU00273"/>
    </source>
</evidence>
<evidence type="ECO:0000255" key="3">
    <source>
        <dbReference type="PROSITE-ProRule" id="PRU10085"/>
    </source>
</evidence>
<evidence type="ECO:0000255" key="4">
    <source>
        <dbReference type="PROSITE-ProRule" id="PRU10086"/>
    </source>
</evidence>
<evidence type="ECO:0000256" key="5">
    <source>
        <dbReference type="SAM" id="MobiDB-lite"/>
    </source>
</evidence>
<evidence type="ECO:0000305" key="6"/>
<sequence>MPIGVPRIIYCWGEELPAQWTDIYNFIFRRRMVFLMQYLDDELCNQICGLLINIHMEDRSKELEKKEIERSGLFKGGPKTQKGGTGAGETGASSIQNKKSNSSSFEDLLAADEDLGIDENNTLEQYTLQKITMEWLNWNAQFFDYSDEPYLFYLAEMLSKDFNKGDARMLFSNNNKFSMPFSQMLNTGSMSDPRRPQSTNGANWNSSEQNNSLDIYSPFRMLANFEAQDYDFKQINPSLASKEEVFKLFNNTILKNGGQRNNNMSKLLTELAQRNWENKTNSQENLYKSTEKALSQRNLRKEYIKDRTLNNYSSDPFNTKGYVNAQGASTGPSPRTRGMHADGSLNYLDFYSYNDSYNDFKTAPRGKQAERAFQEEESKKVFVIINSFGGSVGNGITVHDALQFIKAGSLTLALGVAASAASLALAGGTIGERYVTEGCHVMIHQPECLTSDHTVLTTRGWIPIADVTLDDKVAVLDNNTGEMSYQNPQKVHKYDYEGPMYEVKTAGVDLFVTPNHRMYVNTTNNTTNQNYNLVEASSIFGKKVRYKNDAIWNKTDYQFILPETATLTGHTNKISSTPAIQPEMNAWLTFFGLWIANGHTTKIAEKTAENNQQKQRYKVILTQVKEDVCDIIEQTLNKLGFNFIRSGKDYTIENKQLWSYLNPFDNGALNKYLPDWVWELSSQQCKILLNSLCLGNCLFTKNDDTLHYFSTSERFANDVSRLALHAGTTSTIQLEAAPSNLYDTIIGLPVEVNTTLWRVIINQSSFYSYSTDKSSALNLSNNVACYVNAQSALTLEQNSQKINKNTLVLTKNNVKSQTMHSQRAERVDTALLTQKELDNSLNHEILINKNPGTSQLECVVNPEVNNTSTNDRFVYYKGPVYCLTGPNNVFYVQRNGKAVWTGNSSIQGQASDIWIDSQEIMKIRLDVAEIYSLATYRPRHKILRDLDRDFYLTATETIHYGLADEIASNEVMQEIIEMTSKVWDYHDTKQQRLLESRDSTTSGADTQSQN</sequence>
<dbReference type="EC" id="3.4.21.92"/>
<dbReference type="EMBL" id="L29402">
    <property type="protein sequence ID" value="AAA84150.1"/>
    <property type="molecule type" value="Genomic_DNA"/>
</dbReference>
<dbReference type="PIR" id="T09499">
    <property type="entry name" value="T09499"/>
</dbReference>
<dbReference type="SMR" id="P42379"/>
<dbReference type="MEROPS" id="N11.001"/>
<dbReference type="MEROPS" id="S14.007"/>
<dbReference type="BRENDA" id="3.4.21.92">
    <property type="organism ID" value="1316"/>
</dbReference>
<dbReference type="GO" id="GO:0009570">
    <property type="term" value="C:chloroplast stroma"/>
    <property type="evidence" value="ECO:0007669"/>
    <property type="project" value="UniProtKB-SubCell"/>
</dbReference>
<dbReference type="GO" id="GO:0009368">
    <property type="term" value="C:endopeptidase Clp complex"/>
    <property type="evidence" value="ECO:0007669"/>
    <property type="project" value="TreeGrafter"/>
</dbReference>
<dbReference type="GO" id="GO:0004176">
    <property type="term" value="F:ATP-dependent peptidase activity"/>
    <property type="evidence" value="ECO:0007669"/>
    <property type="project" value="InterPro"/>
</dbReference>
<dbReference type="GO" id="GO:0051117">
    <property type="term" value="F:ATPase binding"/>
    <property type="evidence" value="ECO:0007669"/>
    <property type="project" value="TreeGrafter"/>
</dbReference>
<dbReference type="GO" id="GO:0004519">
    <property type="term" value="F:endonuclease activity"/>
    <property type="evidence" value="ECO:0007669"/>
    <property type="project" value="InterPro"/>
</dbReference>
<dbReference type="GO" id="GO:0004252">
    <property type="term" value="F:serine-type endopeptidase activity"/>
    <property type="evidence" value="ECO:0007669"/>
    <property type="project" value="UniProtKB-EC"/>
</dbReference>
<dbReference type="GO" id="GO:0016539">
    <property type="term" value="P:intein-mediated protein splicing"/>
    <property type="evidence" value="ECO:0007669"/>
    <property type="project" value="InterPro"/>
</dbReference>
<dbReference type="GO" id="GO:0006515">
    <property type="term" value="P:protein quality control for misfolded or incompletely synthesized proteins"/>
    <property type="evidence" value="ECO:0007669"/>
    <property type="project" value="TreeGrafter"/>
</dbReference>
<dbReference type="CDD" id="cd00081">
    <property type="entry name" value="Hint"/>
    <property type="match status" value="1"/>
</dbReference>
<dbReference type="Gene3D" id="3.90.226.10">
    <property type="entry name" value="2-enoyl-CoA Hydratase, Chain A, domain 1"/>
    <property type="match status" value="2"/>
</dbReference>
<dbReference type="Gene3D" id="2.170.16.10">
    <property type="entry name" value="Hedgehog/Intein (Hint) domain"/>
    <property type="match status" value="1"/>
</dbReference>
<dbReference type="Gene3D" id="3.10.28.10">
    <property type="entry name" value="Homing endonucleases"/>
    <property type="match status" value="1"/>
</dbReference>
<dbReference type="InterPro" id="IPR001907">
    <property type="entry name" value="ClpP"/>
</dbReference>
<dbReference type="InterPro" id="IPR029045">
    <property type="entry name" value="ClpP/crotonase-like_dom_sf"/>
</dbReference>
<dbReference type="InterPro" id="IPR023562">
    <property type="entry name" value="ClpP/TepA"/>
</dbReference>
<dbReference type="InterPro" id="IPR033135">
    <property type="entry name" value="ClpP_His_AS"/>
</dbReference>
<dbReference type="InterPro" id="IPR018215">
    <property type="entry name" value="ClpP_Ser_AS"/>
</dbReference>
<dbReference type="InterPro" id="IPR003587">
    <property type="entry name" value="Hint_dom_N"/>
</dbReference>
<dbReference type="InterPro" id="IPR036844">
    <property type="entry name" value="Hint_dom_sf"/>
</dbReference>
<dbReference type="InterPro" id="IPR027434">
    <property type="entry name" value="Homing_endonucl"/>
</dbReference>
<dbReference type="InterPro" id="IPR004042">
    <property type="entry name" value="Intein_endonuc_central"/>
</dbReference>
<dbReference type="InterPro" id="IPR006141">
    <property type="entry name" value="Intein_N"/>
</dbReference>
<dbReference type="PANTHER" id="PTHR10381">
    <property type="entry name" value="ATP-DEPENDENT CLP PROTEASE PROTEOLYTIC SUBUNIT"/>
    <property type="match status" value="1"/>
</dbReference>
<dbReference type="PANTHER" id="PTHR10381:SF11">
    <property type="entry name" value="ATP-DEPENDENT CLP PROTEASE PROTEOLYTIC SUBUNIT, MITOCHONDRIAL"/>
    <property type="match status" value="1"/>
</dbReference>
<dbReference type="Pfam" id="PF00574">
    <property type="entry name" value="CLP_protease"/>
    <property type="match status" value="2"/>
</dbReference>
<dbReference type="PRINTS" id="PR00127">
    <property type="entry name" value="CLPPROTEASEP"/>
</dbReference>
<dbReference type="SMART" id="SM00306">
    <property type="entry name" value="HintN"/>
    <property type="match status" value="1"/>
</dbReference>
<dbReference type="SUPFAM" id="SSF52096">
    <property type="entry name" value="ClpP/crotonase"/>
    <property type="match status" value="2"/>
</dbReference>
<dbReference type="SUPFAM" id="SSF51294">
    <property type="entry name" value="Hedgehog/intein (Hint) domain"/>
    <property type="match status" value="1"/>
</dbReference>
<dbReference type="PROSITE" id="PS00382">
    <property type="entry name" value="CLP_PROTEASE_HIS"/>
    <property type="match status" value="1"/>
</dbReference>
<dbReference type="PROSITE" id="PS00381">
    <property type="entry name" value="CLP_PROTEASE_SER"/>
    <property type="match status" value="1"/>
</dbReference>
<dbReference type="PROSITE" id="PS50819">
    <property type="entry name" value="INTEIN_ENDONUCLEASE"/>
    <property type="match status" value="1"/>
</dbReference>
<dbReference type="PROSITE" id="PS50817">
    <property type="entry name" value="INTEIN_N_TER"/>
    <property type="match status" value="1"/>
</dbReference>
<proteinExistence type="inferred from homology"/>
<protein>
    <recommendedName>
        <fullName>ATP-dependent Clp protease proteolytic subunit</fullName>
        <ecNumber>3.4.21.92</ecNumber>
    </recommendedName>
    <alternativeName>
        <fullName>Endopeptidase Clp</fullName>
    </alternativeName>
    <component>
        <recommendedName>
            <fullName>Ceu clpP intein</fullName>
        </recommendedName>
        <alternativeName>
            <fullName>Insertion IS2</fullName>
        </alternativeName>
    </component>
</protein>
<feature type="chain" id="PRO_0000005513" description="ATP-dependent Clp protease proteolytic subunit, 1st part">
    <location>
        <begin position="1"/>
        <end position="447"/>
    </location>
</feature>
<feature type="chain" id="PRO_0000005514" description="Ceu clpP intein">
    <location>
        <begin position="448"/>
        <end position="903"/>
    </location>
</feature>
<feature type="chain" id="PRO_0000005515" description="ATP-dependent Clp protease proteolytic subunit, 2nd part">
    <location>
        <begin position="904"/>
        <end position="1010"/>
    </location>
</feature>
<feature type="domain" description="DOD-type homing endonuclease" evidence="2">
    <location>
        <begin position="590"/>
        <end position="728"/>
    </location>
</feature>
<feature type="region of interest" description="Insertion IS1">
    <location>
        <begin position="60"/>
        <end position="377"/>
    </location>
</feature>
<feature type="region of interest" description="Disordered" evidence="5">
    <location>
        <begin position="73"/>
        <end position="100"/>
    </location>
</feature>
<feature type="region of interest" description="Disordered" evidence="5">
    <location>
        <begin position="182"/>
        <end position="209"/>
    </location>
</feature>
<feature type="compositionally biased region" description="Low complexity" evidence="5">
    <location>
        <begin position="90"/>
        <end position="100"/>
    </location>
</feature>
<feature type="active site" description="Nucleophile" evidence="3 4">
    <location>
        <position position="419"/>
    </location>
</feature>
<feature type="active site" evidence="1">
    <location>
        <position position="444"/>
    </location>
</feature>
<accession>P42379</accession>
<reference key="1">
    <citation type="journal article" date="1994" name="Mol. Gen. Genet.">
        <title>The Chlamydomonas chloroplast clpP gene contains translated large insertion sequences and is essential for cell growth.</title>
        <authorList>
            <person name="Huang C."/>
            <person name="Wang S."/>
            <person name="Chen L."/>
            <person name="Lemieux C."/>
            <person name="Otis C."/>
            <person name="Turmel M."/>
            <person name="Liu X.-Q."/>
        </authorList>
    </citation>
    <scope>NUCLEOTIDE SEQUENCE [GENOMIC DNA]</scope>
</reference>
<reference key="2">
    <citation type="journal article" date="1997" name="J. Biol. Chem.">
        <title>Identification of an unusual intein in chloroplast ClpP protease of Chlamydomonas eugametos.</title>
        <authorList>
            <person name="Wang S."/>
            <person name="Liu X.-Q."/>
        </authorList>
    </citation>
    <scope>PROTEIN SPLICING</scope>
</reference>